<keyword id="KW-0687">Ribonucleoprotein</keyword>
<keyword id="KW-0689">Ribosomal protein</keyword>
<feature type="chain" id="PRO_1000205762" description="Small ribosomal subunit protein bS16">
    <location>
        <begin position="1"/>
        <end position="88"/>
    </location>
</feature>
<evidence type="ECO:0000255" key="1">
    <source>
        <dbReference type="HAMAP-Rule" id="MF_00385"/>
    </source>
</evidence>
<evidence type="ECO:0000305" key="2"/>
<dbReference type="EMBL" id="CP001661">
    <property type="protein sequence ID" value="ACT19515.1"/>
    <property type="molecule type" value="Genomic_DNA"/>
</dbReference>
<dbReference type="SMR" id="C6E5J1"/>
<dbReference type="STRING" id="443144.GM21_3493"/>
<dbReference type="KEGG" id="gem:GM21_3493"/>
<dbReference type="eggNOG" id="COG0228">
    <property type="taxonomic scope" value="Bacteria"/>
</dbReference>
<dbReference type="HOGENOM" id="CLU_100590_5_0_7"/>
<dbReference type="OrthoDB" id="9807878at2"/>
<dbReference type="GO" id="GO:0005737">
    <property type="term" value="C:cytoplasm"/>
    <property type="evidence" value="ECO:0007669"/>
    <property type="project" value="UniProtKB-ARBA"/>
</dbReference>
<dbReference type="GO" id="GO:0015935">
    <property type="term" value="C:small ribosomal subunit"/>
    <property type="evidence" value="ECO:0007669"/>
    <property type="project" value="TreeGrafter"/>
</dbReference>
<dbReference type="GO" id="GO:0003735">
    <property type="term" value="F:structural constituent of ribosome"/>
    <property type="evidence" value="ECO:0007669"/>
    <property type="project" value="InterPro"/>
</dbReference>
<dbReference type="GO" id="GO:0006412">
    <property type="term" value="P:translation"/>
    <property type="evidence" value="ECO:0007669"/>
    <property type="project" value="UniProtKB-UniRule"/>
</dbReference>
<dbReference type="Gene3D" id="3.30.1320.10">
    <property type="match status" value="1"/>
</dbReference>
<dbReference type="HAMAP" id="MF_00385">
    <property type="entry name" value="Ribosomal_bS16"/>
    <property type="match status" value="1"/>
</dbReference>
<dbReference type="InterPro" id="IPR000307">
    <property type="entry name" value="Ribosomal_bS16"/>
</dbReference>
<dbReference type="InterPro" id="IPR020592">
    <property type="entry name" value="Ribosomal_bS16_CS"/>
</dbReference>
<dbReference type="InterPro" id="IPR023803">
    <property type="entry name" value="Ribosomal_bS16_dom_sf"/>
</dbReference>
<dbReference type="NCBIfam" id="TIGR00002">
    <property type="entry name" value="S16"/>
    <property type="match status" value="1"/>
</dbReference>
<dbReference type="PANTHER" id="PTHR12919">
    <property type="entry name" value="30S RIBOSOMAL PROTEIN S16"/>
    <property type="match status" value="1"/>
</dbReference>
<dbReference type="PANTHER" id="PTHR12919:SF20">
    <property type="entry name" value="SMALL RIBOSOMAL SUBUNIT PROTEIN BS16M"/>
    <property type="match status" value="1"/>
</dbReference>
<dbReference type="Pfam" id="PF00886">
    <property type="entry name" value="Ribosomal_S16"/>
    <property type="match status" value="1"/>
</dbReference>
<dbReference type="SUPFAM" id="SSF54565">
    <property type="entry name" value="Ribosomal protein S16"/>
    <property type="match status" value="1"/>
</dbReference>
<dbReference type="PROSITE" id="PS00732">
    <property type="entry name" value="RIBOSOMAL_S16"/>
    <property type="match status" value="1"/>
</dbReference>
<comment type="similarity">
    <text evidence="1">Belongs to the bacterial ribosomal protein bS16 family.</text>
</comment>
<proteinExistence type="inferred from homology"/>
<protein>
    <recommendedName>
        <fullName evidence="1">Small ribosomal subunit protein bS16</fullName>
    </recommendedName>
    <alternativeName>
        <fullName evidence="2">30S ribosomal protein S16</fullName>
    </alternativeName>
</protein>
<sequence length="88" mass="9894">MAIKIRLARAGAKKKPFYQVVVADCRCRRDGRFIENVGTYDPNKNPAVYNLEEGKTLEWLGKGAQPTDTVKQILKKVGIWEKFVSPAA</sequence>
<organism>
    <name type="scientific">Geobacter sp. (strain M21)</name>
    <dbReference type="NCBI Taxonomy" id="443144"/>
    <lineage>
        <taxon>Bacteria</taxon>
        <taxon>Pseudomonadati</taxon>
        <taxon>Thermodesulfobacteriota</taxon>
        <taxon>Desulfuromonadia</taxon>
        <taxon>Geobacterales</taxon>
        <taxon>Geobacteraceae</taxon>
        <taxon>Geobacter</taxon>
    </lineage>
</organism>
<name>RS16_GEOSM</name>
<accession>C6E5J1</accession>
<reference key="1">
    <citation type="submission" date="2009-07" db="EMBL/GenBank/DDBJ databases">
        <title>Complete sequence of Geobacter sp. M21.</title>
        <authorList>
            <consortium name="US DOE Joint Genome Institute"/>
            <person name="Lucas S."/>
            <person name="Copeland A."/>
            <person name="Lapidus A."/>
            <person name="Glavina del Rio T."/>
            <person name="Dalin E."/>
            <person name="Tice H."/>
            <person name="Bruce D."/>
            <person name="Goodwin L."/>
            <person name="Pitluck S."/>
            <person name="Saunders E."/>
            <person name="Brettin T."/>
            <person name="Detter J.C."/>
            <person name="Han C."/>
            <person name="Larimer F."/>
            <person name="Land M."/>
            <person name="Hauser L."/>
            <person name="Kyrpides N."/>
            <person name="Ovchinnikova G."/>
            <person name="Lovley D."/>
        </authorList>
    </citation>
    <scope>NUCLEOTIDE SEQUENCE [LARGE SCALE GENOMIC DNA]</scope>
    <source>
        <strain>M21</strain>
    </source>
</reference>
<gene>
    <name evidence="1" type="primary">rpsP</name>
    <name type="ordered locus">GM21_3493</name>
</gene>